<evidence type="ECO:0000255" key="1">
    <source>
        <dbReference type="HAMAP-Rule" id="MF_01440"/>
    </source>
</evidence>
<name>CHED_OLEA2</name>
<sequence>MSGYSAEQRAAMQCMSLARHGLPHALADCGLPHVHLKIGEGIVTRRALLISTVLGSCVSVTFFSRRLQLAGIFHAMLPVITQSYRPCNEPCRFVDSAIEAVYGNFEKRGLHPEEVEVKLFGGAFSMGLREEHPDRCMIDVGGRNVLTAREVLAAKGLEIRSEQVQGTRGRKLLFNTRTGEVWVKLLNNAANQLARRQEEQARAQSARGCSLD</sequence>
<dbReference type="EC" id="3.5.1.44" evidence="1"/>
<dbReference type="EMBL" id="CP000112">
    <property type="protein sequence ID" value="ABB40006.1"/>
    <property type="molecule type" value="Genomic_DNA"/>
</dbReference>
<dbReference type="RefSeq" id="WP_011368957.1">
    <property type="nucleotide sequence ID" value="NC_007519.1"/>
</dbReference>
<dbReference type="SMR" id="Q30WE0"/>
<dbReference type="STRING" id="207559.Dde_3212"/>
<dbReference type="KEGG" id="dde:Dde_3212"/>
<dbReference type="eggNOG" id="COG1871">
    <property type="taxonomic scope" value="Bacteria"/>
</dbReference>
<dbReference type="HOGENOM" id="CLU_087854_1_0_7"/>
<dbReference type="Proteomes" id="UP000002710">
    <property type="component" value="Chromosome"/>
</dbReference>
<dbReference type="GO" id="GO:0050568">
    <property type="term" value="F:protein-glutamine glutaminase activity"/>
    <property type="evidence" value="ECO:0007669"/>
    <property type="project" value="UniProtKB-UniRule"/>
</dbReference>
<dbReference type="GO" id="GO:0006935">
    <property type="term" value="P:chemotaxis"/>
    <property type="evidence" value="ECO:0007669"/>
    <property type="project" value="UniProtKB-UniRule"/>
</dbReference>
<dbReference type="CDD" id="cd16352">
    <property type="entry name" value="CheD"/>
    <property type="match status" value="1"/>
</dbReference>
<dbReference type="Gene3D" id="3.30.1330.200">
    <property type="match status" value="1"/>
</dbReference>
<dbReference type="HAMAP" id="MF_01440">
    <property type="entry name" value="CheD"/>
    <property type="match status" value="1"/>
</dbReference>
<dbReference type="InterPro" id="IPR038592">
    <property type="entry name" value="CheD-like_sf"/>
</dbReference>
<dbReference type="InterPro" id="IPR005659">
    <property type="entry name" value="Chemorcpt_Glu_NH3ase_CheD"/>
</dbReference>
<dbReference type="InterPro" id="IPR011324">
    <property type="entry name" value="Cytotoxic_necrot_fac-like_cat"/>
</dbReference>
<dbReference type="PANTHER" id="PTHR35147">
    <property type="entry name" value="CHEMORECEPTOR GLUTAMINE DEAMIDASE CHED-RELATED"/>
    <property type="match status" value="1"/>
</dbReference>
<dbReference type="PANTHER" id="PTHR35147:SF1">
    <property type="entry name" value="CHEMORECEPTOR GLUTAMINE DEAMIDASE CHED-RELATED"/>
    <property type="match status" value="1"/>
</dbReference>
<dbReference type="Pfam" id="PF03975">
    <property type="entry name" value="CheD"/>
    <property type="match status" value="1"/>
</dbReference>
<dbReference type="SUPFAM" id="SSF64438">
    <property type="entry name" value="CNF1/YfiH-like putative cysteine hydrolases"/>
    <property type="match status" value="1"/>
</dbReference>
<feature type="chain" id="PRO_0000251030" description="Probable chemoreceptor glutamine deamidase CheD">
    <location>
        <begin position="1"/>
        <end position="212"/>
    </location>
</feature>
<organism>
    <name type="scientific">Oleidesulfovibrio alaskensis (strain ATCC BAA-1058 / DSM 17464 / G20)</name>
    <name type="common">Desulfovibrio alaskensis</name>
    <dbReference type="NCBI Taxonomy" id="207559"/>
    <lineage>
        <taxon>Bacteria</taxon>
        <taxon>Pseudomonadati</taxon>
        <taxon>Thermodesulfobacteriota</taxon>
        <taxon>Desulfovibrionia</taxon>
        <taxon>Desulfovibrionales</taxon>
        <taxon>Desulfovibrionaceae</taxon>
        <taxon>Oleidesulfovibrio</taxon>
    </lineage>
</organism>
<protein>
    <recommendedName>
        <fullName evidence="1">Probable chemoreceptor glutamine deamidase CheD</fullName>
        <ecNumber evidence="1">3.5.1.44</ecNumber>
    </recommendedName>
</protein>
<accession>Q30WE0</accession>
<comment type="function">
    <text evidence="1">Probably deamidates glutamine residues to glutamate on methyl-accepting chemotaxis receptors (MCPs), playing an important role in chemotaxis.</text>
</comment>
<comment type="catalytic activity">
    <reaction evidence="1">
        <text>L-glutaminyl-[protein] + H2O = L-glutamyl-[protein] + NH4(+)</text>
        <dbReference type="Rhea" id="RHEA:16441"/>
        <dbReference type="Rhea" id="RHEA-COMP:10207"/>
        <dbReference type="Rhea" id="RHEA-COMP:10208"/>
        <dbReference type="ChEBI" id="CHEBI:15377"/>
        <dbReference type="ChEBI" id="CHEBI:28938"/>
        <dbReference type="ChEBI" id="CHEBI:29973"/>
        <dbReference type="ChEBI" id="CHEBI:30011"/>
        <dbReference type="EC" id="3.5.1.44"/>
    </reaction>
</comment>
<comment type="similarity">
    <text evidence="1">Belongs to the CheD family.</text>
</comment>
<gene>
    <name evidence="1" type="primary">cheD</name>
    <name type="ordered locus">Dde_3212</name>
</gene>
<proteinExistence type="inferred from homology"/>
<reference key="1">
    <citation type="journal article" date="2011" name="J. Bacteriol.">
        <title>Complete genome sequence and updated annotation of Desulfovibrio alaskensis G20.</title>
        <authorList>
            <person name="Hauser L.J."/>
            <person name="Land M.L."/>
            <person name="Brown S.D."/>
            <person name="Larimer F."/>
            <person name="Keller K.L."/>
            <person name="Rapp-Giles B.J."/>
            <person name="Price M.N."/>
            <person name="Lin M."/>
            <person name="Bruce D.C."/>
            <person name="Detter J.C."/>
            <person name="Tapia R."/>
            <person name="Han C.S."/>
            <person name="Goodwin L.A."/>
            <person name="Cheng J.F."/>
            <person name="Pitluck S."/>
            <person name="Copeland A."/>
            <person name="Lucas S."/>
            <person name="Nolan M."/>
            <person name="Lapidus A.L."/>
            <person name="Palumbo A.V."/>
            <person name="Wall J.D."/>
        </authorList>
    </citation>
    <scope>NUCLEOTIDE SEQUENCE [LARGE SCALE GENOMIC DNA]</scope>
    <source>
        <strain>ATCC BAA-1058 / DSM 17464 / G20</strain>
    </source>
</reference>
<keyword id="KW-0145">Chemotaxis</keyword>
<keyword id="KW-0378">Hydrolase</keyword>
<keyword id="KW-1185">Reference proteome</keyword>